<protein>
    <recommendedName>
        <fullName evidence="1">3-hydroxyacyl-[acyl-carrier-protein] dehydratase FabZ</fullName>
        <ecNumber evidence="1">4.2.1.59</ecNumber>
    </recommendedName>
    <alternativeName>
        <fullName evidence="1">(3R)-hydroxymyristoyl-[acyl-carrier-protein] dehydratase</fullName>
        <shortName evidence="1">(3R)-hydroxymyristoyl-ACP dehydrase</shortName>
    </alternativeName>
    <alternativeName>
        <fullName evidence="1">Beta-hydroxyacyl-ACP dehydratase</fullName>
    </alternativeName>
</protein>
<organism>
    <name type="scientific">Buchnera aphidicola subsp. Acyrthosiphon pisum (strain Tuc7)</name>
    <dbReference type="NCBI Taxonomy" id="561501"/>
    <lineage>
        <taxon>Bacteria</taxon>
        <taxon>Pseudomonadati</taxon>
        <taxon>Pseudomonadota</taxon>
        <taxon>Gammaproteobacteria</taxon>
        <taxon>Enterobacterales</taxon>
        <taxon>Erwiniaceae</taxon>
        <taxon>Buchnera</taxon>
    </lineage>
</organism>
<comment type="function">
    <text evidence="1">Involved in unsaturated fatty acids biosynthesis. Catalyzes the dehydration of short chain beta-hydroxyacyl-ACPs and long chain saturated and unsaturated beta-hydroxyacyl-ACPs.</text>
</comment>
<comment type="catalytic activity">
    <reaction evidence="1">
        <text>a (3R)-hydroxyacyl-[ACP] = a (2E)-enoyl-[ACP] + H2O</text>
        <dbReference type="Rhea" id="RHEA:13097"/>
        <dbReference type="Rhea" id="RHEA-COMP:9925"/>
        <dbReference type="Rhea" id="RHEA-COMP:9945"/>
        <dbReference type="ChEBI" id="CHEBI:15377"/>
        <dbReference type="ChEBI" id="CHEBI:78784"/>
        <dbReference type="ChEBI" id="CHEBI:78827"/>
        <dbReference type="EC" id="4.2.1.59"/>
    </reaction>
</comment>
<comment type="subcellular location">
    <subcellularLocation>
        <location evidence="1">Cytoplasm</location>
    </subcellularLocation>
</comment>
<comment type="similarity">
    <text evidence="1">Belongs to the thioester dehydratase family. FabZ subfamily.</text>
</comment>
<reference key="1">
    <citation type="journal article" date="2009" name="Science">
        <title>The dynamics and time scale of ongoing genomic erosion in symbiotic bacteria.</title>
        <authorList>
            <person name="Moran N.A."/>
            <person name="McLaughlin H.J."/>
            <person name="Sorek R."/>
        </authorList>
    </citation>
    <scope>NUCLEOTIDE SEQUENCE [LARGE SCALE GENOMIC DNA]</scope>
    <source>
        <strain>Tuc7</strain>
    </source>
</reference>
<gene>
    <name evidence="1" type="primary">fabZ</name>
    <name type="ordered locus">BUAPTUC7_235</name>
</gene>
<sequence length="151" mass="17482">MNVINNTLNIKKIFKILPHRYPFLLIDRVLNFEKFKYLQAIKNCSINEPYFQGHFSNEPVFPGVLIIESMAQAASILIYKSTGELNINKLYYFVGVDDTRFKKIAIPGDQIFIKVTILKSNKNILIFKNIAVVNNDIICKSKIVFAKKYLF</sequence>
<proteinExistence type="inferred from homology"/>
<keyword id="KW-0963">Cytoplasm</keyword>
<keyword id="KW-0441">Lipid A biosynthesis</keyword>
<keyword id="KW-0444">Lipid biosynthesis</keyword>
<keyword id="KW-0443">Lipid metabolism</keyword>
<keyword id="KW-0456">Lyase</keyword>
<name>FABZ_BUCAT</name>
<accession>B8D7D9</accession>
<dbReference type="EC" id="4.2.1.59" evidence="1"/>
<dbReference type="EMBL" id="CP001158">
    <property type="protein sequence ID" value="ACL30054.1"/>
    <property type="molecule type" value="Genomic_DNA"/>
</dbReference>
<dbReference type="RefSeq" id="WP_009874194.1">
    <property type="nucleotide sequence ID" value="NC_011834.1"/>
</dbReference>
<dbReference type="SMR" id="B8D7D9"/>
<dbReference type="KEGG" id="bau:BUAPTUC7_235"/>
<dbReference type="HOGENOM" id="CLU_078912_1_0_6"/>
<dbReference type="GO" id="GO:0005737">
    <property type="term" value="C:cytoplasm"/>
    <property type="evidence" value="ECO:0007669"/>
    <property type="project" value="UniProtKB-SubCell"/>
</dbReference>
<dbReference type="GO" id="GO:0016020">
    <property type="term" value="C:membrane"/>
    <property type="evidence" value="ECO:0007669"/>
    <property type="project" value="GOC"/>
</dbReference>
<dbReference type="GO" id="GO:0019171">
    <property type="term" value="F:(3R)-hydroxyacyl-[acyl-carrier-protein] dehydratase activity"/>
    <property type="evidence" value="ECO:0007669"/>
    <property type="project" value="UniProtKB-EC"/>
</dbReference>
<dbReference type="GO" id="GO:0006633">
    <property type="term" value="P:fatty acid biosynthetic process"/>
    <property type="evidence" value="ECO:0007669"/>
    <property type="project" value="UniProtKB-UniRule"/>
</dbReference>
<dbReference type="GO" id="GO:0009245">
    <property type="term" value="P:lipid A biosynthetic process"/>
    <property type="evidence" value="ECO:0007669"/>
    <property type="project" value="UniProtKB-UniRule"/>
</dbReference>
<dbReference type="CDD" id="cd01288">
    <property type="entry name" value="FabZ"/>
    <property type="match status" value="1"/>
</dbReference>
<dbReference type="FunFam" id="3.10.129.10:FF:000001">
    <property type="entry name" value="3-hydroxyacyl-[acyl-carrier-protein] dehydratase FabZ"/>
    <property type="match status" value="1"/>
</dbReference>
<dbReference type="Gene3D" id="3.10.129.10">
    <property type="entry name" value="Hotdog Thioesterase"/>
    <property type="match status" value="1"/>
</dbReference>
<dbReference type="HAMAP" id="MF_00406">
    <property type="entry name" value="FabZ"/>
    <property type="match status" value="1"/>
</dbReference>
<dbReference type="InterPro" id="IPR013114">
    <property type="entry name" value="FabA_FabZ"/>
</dbReference>
<dbReference type="InterPro" id="IPR010084">
    <property type="entry name" value="FabZ"/>
</dbReference>
<dbReference type="InterPro" id="IPR029069">
    <property type="entry name" value="HotDog_dom_sf"/>
</dbReference>
<dbReference type="NCBIfam" id="TIGR01750">
    <property type="entry name" value="fabZ"/>
    <property type="match status" value="1"/>
</dbReference>
<dbReference type="NCBIfam" id="NF000582">
    <property type="entry name" value="PRK00006.1"/>
    <property type="match status" value="1"/>
</dbReference>
<dbReference type="PANTHER" id="PTHR30272">
    <property type="entry name" value="3-HYDROXYACYL-[ACYL-CARRIER-PROTEIN] DEHYDRATASE"/>
    <property type="match status" value="1"/>
</dbReference>
<dbReference type="PANTHER" id="PTHR30272:SF1">
    <property type="entry name" value="3-HYDROXYACYL-[ACYL-CARRIER-PROTEIN] DEHYDRATASE"/>
    <property type="match status" value="1"/>
</dbReference>
<dbReference type="Pfam" id="PF07977">
    <property type="entry name" value="FabA"/>
    <property type="match status" value="1"/>
</dbReference>
<dbReference type="SUPFAM" id="SSF54637">
    <property type="entry name" value="Thioesterase/thiol ester dehydrase-isomerase"/>
    <property type="match status" value="1"/>
</dbReference>
<evidence type="ECO:0000255" key="1">
    <source>
        <dbReference type="HAMAP-Rule" id="MF_00406"/>
    </source>
</evidence>
<feature type="chain" id="PRO_1000134691" description="3-hydroxyacyl-[acyl-carrier-protein] dehydratase FabZ">
    <location>
        <begin position="1"/>
        <end position="151"/>
    </location>
</feature>
<feature type="active site" evidence="1">
    <location>
        <position position="54"/>
    </location>
</feature>